<evidence type="ECO:0000256" key="1">
    <source>
        <dbReference type="SAM" id="MobiDB-lite"/>
    </source>
</evidence>
<evidence type="ECO:0000269" key="2">
    <source>
    </source>
</evidence>
<evidence type="ECO:0000269" key="3">
    <source>
    </source>
</evidence>
<evidence type="ECO:0000305" key="4"/>
<evidence type="ECO:0000312" key="5">
    <source>
        <dbReference type="HGNC" id="HGNC:34346"/>
    </source>
</evidence>
<feature type="chain" id="PRO_0000341950" description="Cilia-and flagella-associated protein 96">
    <location>
        <begin position="1"/>
        <end position="309"/>
    </location>
</feature>
<feature type="region of interest" description="Disordered" evidence="1">
    <location>
        <begin position="220"/>
        <end position="249"/>
    </location>
</feature>
<dbReference type="EMBL" id="BC150574">
    <property type="protein sequence ID" value="AAI50575.1"/>
    <property type="molecule type" value="mRNA"/>
</dbReference>
<dbReference type="EMBL" id="AY947525">
    <property type="protein sequence ID" value="AAX21786.1"/>
    <property type="molecule type" value="mRNA"/>
</dbReference>
<dbReference type="CCDS" id="CCDS47169.1"/>
<dbReference type="RefSeq" id="NP_001107829.1">
    <property type="nucleotide sequence ID" value="NM_001114357.3"/>
</dbReference>
<dbReference type="RefSeq" id="XP_005263076.1">
    <property type="nucleotide sequence ID" value="XM_005263019.3"/>
</dbReference>
<dbReference type="RefSeq" id="XP_011530291.1">
    <property type="nucleotide sequence ID" value="XM_011531989.3"/>
</dbReference>
<dbReference type="RefSeq" id="XP_016863725.1">
    <property type="nucleotide sequence ID" value="XM_017008236.1"/>
</dbReference>
<dbReference type="RefSeq" id="XP_016863726.1">
    <property type="nucleotide sequence ID" value="XM_017008237.1"/>
</dbReference>
<dbReference type="RefSeq" id="XP_016863727.1">
    <property type="nucleotide sequence ID" value="XM_017008238.2"/>
</dbReference>
<dbReference type="RefSeq" id="XP_016863728.1">
    <property type="nucleotide sequence ID" value="XM_017008239.2"/>
</dbReference>
<dbReference type="RefSeq" id="XP_016863729.1">
    <property type="nucleotide sequence ID" value="XM_017008240.2"/>
</dbReference>
<dbReference type="RefSeq" id="XP_047271674.1">
    <property type="nucleotide sequence ID" value="XM_047415718.1"/>
</dbReference>
<dbReference type="RefSeq" id="XP_047271675.1">
    <property type="nucleotide sequence ID" value="XM_047415719.1"/>
</dbReference>
<dbReference type="SMR" id="A7E2U8"/>
<dbReference type="BioGRID" id="137120">
    <property type="interactions" value="6"/>
</dbReference>
<dbReference type="FunCoup" id="A7E2U8">
    <property type="interactions" value="108"/>
</dbReference>
<dbReference type="IntAct" id="A7E2U8">
    <property type="interactions" value="2"/>
</dbReference>
<dbReference type="STRING" id="9606.ENSP00000368127"/>
<dbReference type="iPTMnet" id="A7E2U8"/>
<dbReference type="PhosphoSitePlus" id="A7E2U8"/>
<dbReference type="BioMuta" id="C4orf47"/>
<dbReference type="jPOST" id="A7E2U8"/>
<dbReference type="MassIVE" id="A7E2U8"/>
<dbReference type="PaxDb" id="9606-ENSP00000368127"/>
<dbReference type="PeptideAtlas" id="A7E2U8"/>
<dbReference type="ProteomicsDB" id="1796"/>
<dbReference type="Antibodypedia" id="52303">
    <property type="antibodies" value="22 antibodies from 10 providers"/>
</dbReference>
<dbReference type="DNASU" id="441054"/>
<dbReference type="Ensembl" id="ENST00000378850.5">
    <property type="protein sequence ID" value="ENSP00000368127.4"/>
    <property type="gene ID" value="ENSG00000205129.9"/>
</dbReference>
<dbReference type="GeneID" id="441054"/>
<dbReference type="KEGG" id="hsa:441054"/>
<dbReference type="MANE-Select" id="ENST00000378850.5">
    <property type="protein sequence ID" value="ENSP00000368127.4"/>
    <property type="RefSeq nucleotide sequence ID" value="NM_001114357.3"/>
    <property type="RefSeq protein sequence ID" value="NP_001107829.1"/>
</dbReference>
<dbReference type="UCSC" id="uc003ixt.3">
    <property type="organism name" value="human"/>
</dbReference>
<dbReference type="AGR" id="HGNC:34346"/>
<dbReference type="CTD" id="441054"/>
<dbReference type="DisGeNET" id="441054"/>
<dbReference type="GeneCards" id="CFAP96"/>
<dbReference type="HGNC" id="HGNC:34346">
    <property type="gene designation" value="CFAP96"/>
</dbReference>
<dbReference type="HPA" id="ENSG00000205129">
    <property type="expression patterns" value="Tissue enhanced (choroid plexus, fallopian tube, retina, testis)"/>
</dbReference>
<dbReference type="MalaCards" id="CFAP96"/>
<dbReference type="neXtProt" id="NX_A7E2U8"/>
<dbReference type="OpenTargets" id="ENSG00000205129"/>
<dbReference type="PharmGKB" id="PA162379983"/>
<dbReference type="VEuPathDB" id="HostDB:ENSG00000205129"/>
<dbReference type="eggNOG" id="ENOG502QVET">
    <property type="taxonomic scope" value="Eukaryota"/>
</dbReference>
<dbReference type="GeneTree" id="ENSGT00390000010980"/>
<dbReference type="HOGENOM" id="CLU_078899_0_0_1"/>
<dbReference type="InParanoid" id="A7E2U8"/>
<dbReference type="OMA" id="YMMEEAK"/>
<dbReference type="OrthoDB" id="283553at2759"/>
<dbReference type="PAN-GO" id="A7E2U8">
    <property type="GO annotations" value="1 GO annotation based on evolutionary models"/>
</dbReference>
<dbReference type="PhylomeDB" id="A7E2U8"/>
<dbReference type="TreeFam" id="TF329198"/>
<dbReference type="PathwayCommons" id="A7E2U8"/>
<dbReference type="SignaLink" id="A7E2U8"/>
<dbReference type="BioGRID-ORCS" id="441054">
    <property type="hits" value="12 hits in 1114 CRISPR screens"/>
</dbReference>
<dbReference type="ChiTaRS" id="C4orf47">
    <property type="organism name" value="human"/>
</dbReference>
<dbReference type="GenomeRNAi" id="441054"/>
<dbReference type="Pharos" id="A7E2U8">
    <property type="development level" value="Tdark"/>
</dbReference>
<dbReference type="PRO" id="PR:A7E2U8"/>
<dbReference type="Proteomes" id="UP000005640">
    <property type="component" value="Chromosome 4"/>
</dbReference>
<dbReference type="RNAct" id="A7E2U8">
    <property type="molecule type" value="protein"/>
</dbReference>
<dbReference type="Bgee" id="ENSG00000205129">
    <property type="expression patterns" value="Expressed in oocyte and 130 other cell types or tissues"/>
</dbReference>
<dbReference type="ExpressionAtlas" id="A7E2U8">
    <property type="expression patterns" value="baseline and differential"/>
</dbReference>
<dbReference type="GO" id="GO:0097731">
    <property type="term" value="C:9+0 non-motile cilium"/>
    <property type="evidence" value="ECO:0000314"/>
    <property type="project" value="GO_Central"/>
</dbReference>
<dbReference type="GO" id="GO:0005813">
    <property type="term" value="C:centrosome"/>
    <property type="evidence" value="ECO:0000314"/>
    <property type="project" value="UniProtKB"/>
</dbReference>
<dbReference type="GO" id="GO:0005881">
    <property type="term" value="C:cytoplasmic microtubule"/>
    <property type="evidence" value="ECO:0000314"/>
    <property type="project" value="GO_Central"/>
</dbReference>
<dbReference type="InterPro" id="IPR029358">
    <property type="entry name" value="CFAP96"/>
</dbReference>
<dbReference type="PANTHER" id="PTHR31144">
    <property type="entry name" value="UPF0602 PROTEIN C4ORF47"/>
    <property type="match status" value="1"/>
</dbReference>
<dbReference type="PANTHER" id="PTHR31144:SF1">
    <property type="entry name" value="UPF0602 PROTEIN C4ORF47"/>
    <property type="match status" value="1"/>
</dbReference>
<dbReference type="Pfam" id="PF15239">
    <property type="entry name" value="CFAP96-like"/>
    <property type="match status" value="1"/>
</dbReference>
<accession>A7E2U8</accession>
<accession>Q5BLP7</accession>
<name>CFA96_HUMAN</name>
<sequence>MPAEGGKTDMERIGLFSEMEYITVGDKYVSQFNRPFNEAASKNKQMLPGGSKEMSDLQAGYFDPHFVRIFEGEGYINLNQVRRRDMVEAAKKNLGKAFLPSNGEKKPCGLGSYYGTIGGPVPFFSAQSKPREKYKAPGKNLYTNPGKKGTGYGYANITIGKQFSHSADFYDAAKLKYKKANEEHHRLLKGAPFKLNLHPRDYFDANPYFSEESLPPIKKEEKKKTISNTFKPSSPGKKPGGMKAGTFDPYPSHSADPYVAKLANISGKDDKIFHPPSGPKSRPVESIMTLNVRRALNSKNYKTSSVPSY</sequence>
<comment type="subcellular location">
    <subcellularLocation>
        <location evidence="3">Cytoplasm</location>
        <location evidence="3">Cytoskeleton</location>
        <location evidence="3">Microtubule organizing center</location>
        <location evidence="3">Centrosome</location>
    </subcellularLocation>
</comment>
<comment type="tissue specificity">
    <text evidence="2">Detected in testis and fetal liver.</text>
</comment>
<comment type="similarity">
    <text evidence="4">Belongs to the CFAP96 family.</text>
</comment>
<reference key="1">
    <citation type="journal article" date="2004" name="Genome Res.">
        <title>The status, quality, and expansion of the NIH full-length cDNA project: the Mammalian Gene Collection (MGC).</title>
        <authorList>
            <consortium name="The MGC Project Team"/>
        </authorList>
    </citation>
    <scope>NUCLEOTIDE SEQUENCE [LARGE SCALE MRNA]</scope>
</reference>
<reference key="2">
    <citation type="journal article" date="2005" name="Nucleic Acids Res.">
        <title>Comparative gene finding in chicken indicates that we are closing in on the set of multi-exonic widely expressed human genes.</title>
        <authorList>
            <person name="Castelo R."/>
            <person name="Reymond A."/>
            <person name="Wyss C."/>
            <person name="Camara F."/>
            <person name="Parra G."/>
            <person name="Antonarakis S.E."/>
            <person name="Guigo R."/>
            <person name="Eyras E."/>
        </authorList>
    </citation>
    <scope>NUCLEOTIDE SEQUENCE [MRNA] OF 38-129</scope>
    <scope>TISSUE SPECIFICITY</scope>
</reference>
<reference key="3">
    <citation type="journal article" date="2014" name="J. Cell Sci.">
        <title>Proteomic analysis of mammalian sperm cells identifies new components of the centrosome.</title>
        <authorList>
            <person name="Firat-Karalar E.N."/>
            <person name="Sante J."/>
            <person name="Elliott S."/>
            <person name="Stearns T."/>
        </authorList>
    </citation>
    <scope>SUBCELLULAR LOCATION</scope>
</reference>
<gene>
    <name evidence="5" type="primary">CFAP96</name>
    <name type="synonym">C4orf47</name>
</gene>
<protein>
    <recommendedName>
        <fullName>Cilia-and flagella-associated protein 96</fullName>
    </recommendedName>
</protein>
<organism>
    <name type="scientific">Homo sapiens</name>
    <name type="common">Human</name>
    <dbReference type="NCBI Taxonomy" id="9606"/>
    <lineage>
        <taxon>Eukaryota</taxon>
        <taxon>Metazoa</taxon>
        <taxon>Chordata</taxon>
        <taxon>Craniata</taxon>
        <taxon>Vertebrata</taxon>
        <taxon>Euteleostomi</taxon>
        <taxon>Mammalia</taxon>
        <taxon>Eutheria</taxon>
        <taxon>Euarchontoglires</taxon>
        <taxon>Primates</taxon>
        <taxon>Haplorrhini</taxon>
        <taxon>Catarrhini</taxon>
        <taxon>Hominidae</taxon>
        <taxon>Homo</taxon>
    </lineage>
</organism>
<proteinExistence type="evidence at protein level"/>
<keyword id="KW-0963">Cytoplasm</keyword>
<keyword id="KW-0206">Cytoskeleton</keyword>
<keyword id="KW-1267">Proteomics identification</keyword>
<keyword id="KW-1185">Reference proteome</keyword>